<dbReference type="EMBL" id="CP000352">
    <property type="protein sequence ID" value="ABF09053.1"/>
    <property type="molecule type" value="Genomic_DNA"/>
</dbReference>
<dbReference type="SMR" id="Q1LLC3"/>
<dbReference type="STRING" id="266264.Rmet_2174"/>
<dbReference type="KEGG" id="rme:Rmet_2174"/>
<dbReference type="eggNOG" id="COG0361">
    <property type="taxonomic scope" value="Bacteria"/>
</dbReference>
<dbReference type="HOGENOM" id="CLU_151267_1_0_4"/>
<dbReference type="Proteomes" id="UP000002429">
    <property type="component" value="Chromosome"/>
</dbReference>
<dbReference type="GO" id="GO:0005829">
    <property type="term" value="C:cytosol"/>
    <property type="evidence" value="ECO:0007669"/>
    <property type="project" value="TreeGrafter"/>
</dbReference>
<dbReference type="GO" id="GO:0043022">
    <property type="term" value="F:ribosome binding"/>
    <property type="evidence" value="ECO:0007669"/>
    <property type="project" value="UniProtKB-UniRule"/>
</dbReference>
<dbReference type="GO" id="GO:0019843">
    <property type="term" value="F:rRNA binding"/>
    <property type="evidence" value="ECO:0007669"/>
    <property type="project" value="UniProtKB-UniRule"/>
</dbReference>
<dbReference type="GO" id="GO:0003743">
    <property type="term" value="F:translation initiation factor activity"/>
    <property type="evidence" value="ECO:0007669"/>
    <property type="project" value="UniProtKB-UniRule"/>
</dbReference>
<dbReference type="CDD" id="cd04451">
    <property type="entry name" value="S1_IF1"/>
    <property type="match status" value="1"/>
</dbReference>
<dbReference type="FunFam" id="2.40.50.140:FF:000002">
    <property type="entry name" value="Translation initiation factor IF-1"/>
    <property type="match status" value="1"/>
</dbReference>
<dbReference type="Gene3D" id="2.40.50.140">
    <property type="entry name" value="Nucleic acid-binding proteins"/>
    <property type="match status" value="1"/>
</dbReference>
<dbReference type="HAMAP" id="MF_00075">
    <property type="entry name" value="IF_1"/>
    <property type="match status" value="1"/>
</dbReference>
<dbReference type="InterPro" id="IPR012340">
    <property type="entry name" value="NA-bd_OB-fold"/>
</dbReference>
<dbReference type="InterPro" id="IPR006196">
    <property type="entry name" value="RNA-binding_domain_S1_IF1"/>
</dbReference>
<dbReference type="InterPro" id="IPR004368">
    <property type="entry name" value="TIF_IF1"/>
</dbReference>
<dbReference type="NCBIfam" id="TIGR00008">
    <property type="entry name" value="infA"/>
    <property type="match status" value="1"/>
</dbReference>
<dbReference type="PANTHER" id="PTHR33370">
    <property type="entry name" value="TRANSLATION INITIATION FACTOR IF-1, CHLOROPLASTIC"/>
    <property type="match status" value="1"/>
</dbReference>
<dbReference type="PANTHER" id="PTHR33370:SF1">
    <property type="entry name" value="TRANSLATION INITIATION FACTOR IF-1, CHLOROPLASTIC"/>
    <property type="match status" value="1"/>
</dbReference>
<dbReference type="Pfam" id="PF01176">
    <property type="entry name" value="eIF-1a"/>
    <property type="match status" value="1"/>
</dbReference>
<dbReference type="SUPFAM" id="SSF50249">
    <property type="entry name" value="Nucleic acid-binding proteins"/>
    <property type="match status" value="1"/>
</dbReference>
<dbReference type="PROSITE" id="PS50832">
    <property type="entry name" value="S1_IF1_TYPE"/>
    <property type="match status" value="1"/>
</dbReference>
<keyword id="KW-0963">Cytoplasm</keyword>
<keyword id="KW-0396">Initiation factor</keyword>
<keyword id="KW-0648">Protein biosynthesis</keyword>
<keyword id="KW-1185">Reference proteome</keyword>
<keyword id="KW-0694">RNA-binding</keyword>
<keyword id="KW-0699">rRNA-binding</keyword>
<comment type="function">
    <text evidence="1">One of the essential components for the initiation of protein synthesis. Stabilizes the binding of IF-2 and IF-3 on the 30S subunit to which N-formylmethionyl-tRNA(fMet) subsequently binds. Helps modulate mRNA selection, yielding the 30S pre-initiation complex (PIC). Upon addition of the 50S ribosomal subunit IF-1, IF-2 and IF-3 are released leaving the mature 70S translation initiation complex.</text>
</comment>
<comment type="subunit">
    <text evidence="1">Component of the 30S ribosomal translation pre-initiation complex which assembles on the 30S ribosome in the order IF-2 and IF-3, IF-1 and N-formylmethionyl-tRNA(fMet); mRNA recruitment can occur at any time during PIC assembly.</text>
</comment>
<comment type="subcellular location">
    <subcellularLocation>
        <location evidence="1">Cytoplasm</location>
    </subcellularLocation>
</comment>
<comment type="similarity">
    <text evidence="1">Belongs to the IF-1 family.</text>
</comment>
<evidence type="ECO:0000255" key="1">
    <source>
        <dbReference type="HAMAP-Rule" id="MF_00075"/>
    </source>
</evidence>
<reference key="1">
    <citation type="journal article" date="2010" name="PLoS ONE">
        <title>The complete genome sequence of Cupriavidus metallidurans strain CH34, a master survivalist in harsh and anthropogenic environments.</title>
        <authorList>
            <person name="Janssen P.J."/>
            <person name="Van Houdt R."/>
            <person name="Moors H."/>
            <person name="Monsieurs P."/>
            <person name="Morin N."/>
            <person name="Michaux A."/>
            <person name="Benotmane M.A."/>
            <person name="Leys N."/>
            <person name="Vallaeys T."/>
            <person name="Lapidus A."/>
            <person name="Monchy S."/>
            <person name="Medigue C."/>
            <person name="Taghavi S."/>
            <person name="McCorkle S."/>
            <person name="Dunn J."/>
            <person name="van der Lelie D."/>
            <person name="Mergeay M."/>
        </authorList>
    </citation>
    <scope>NUCLEOTIDE SEQUENCE [LARGE SCALE GENOMIC DNA]</scope>
    <source>
        <strain>ATCC 43123 / DSM 2839 / NBRC 102507 / CH34</strain>
    </source>
</reference>
<gene>
    <name evidence="1" type="primary">infA1</name>
    <name type="ordered locus">Rmet_2174</name>
</gene>
<protein>
    <recommendedName>
        <fullName evidence="1">Translation initiation factor IF-1 1</fullName>
    </recommendedName>
</protein>
<organism>
    <name type="scientific">Cupriavidus metallidurans (strain ATCC 43123 / DSM 2839 / NBRC 102507 / CH34)</name>
    <name type="common">Ralstonia metallidurans</name>
    <dbReference type="NCBI Taxonomy" id="266264"/>
    <lineage>
        <taxon>Bacteria</taxon>
        <taxon>Pseudomonadati</taxon>
        <taxon>Pseudomonadota</taxon>
        <taxon>Betaproteobacteria</taxon>
        <taxon>Burkholderiales</taxon>
        <taxon>Burkholderiaceae</taxon>
        <taxon>Cupriavidus</taxon>
    </lineage>
</organism>
<proteinExistence type="inferred from homology"/>
<name>IF11_CUPMC</name>
<accession>Q1LLC3</accession>
<feature type="chain" id="PRO_0000263849" description="Translation initiation factor IF-1 1">
    <location>
        <begin position="1"/>
        <end position="73"/>
    </location>
</feature>
<feature type="domain" description="S1-like" evidence="1">
    <location>
        <begin position="1"/>
        <end position="72"/>
    </location>
</feature>
<sequence length="73" mass="8394">MAKEELIEFGGVVSEALPDNRYRVTLENGVEIWAYASGKMQKHRIRILAGDRVTLEMSPYDLTKGRINFRHKS</sequence>